<feature type="chain" id="PRO_0000207957" description="Protein PsbN">
    <location>
        <begin position="1"/>
        <end position="43"/>
    </location>
</feature>
<feature type="transmembrane region" description="Helical" evidence="1">
    <location>
        <begin position="5"/>
        <end position="27"/>
    </location>
</feature>
<reference key="1">
    <citation type="journal article" date="2003" name="Am. J. Bot.">
        <title>Polarity of peatmoss (Sphagnum) evolution: who says bryophytes have no roots?</title>
        <authorList>
            <person name="Shaw A.J."/>
            <person name="Cox C.J."/>
            <person name="Boles S.B."/>
        </authorList>
    </citation>
    <scope>NUCLEOTIDE SEQUENCE [GENOMIC DNA]</scope>
</reference>
<geneLocation type="chloroplast"/>
<evidence type="ECO:0000255" key="1">
    <source>
        <dbReference type="HAMAP-Rule" id="MF_00293"/>
    </source>
</evidence>
<gene>
    <name evidence="1" type="primary">psbN</name>
</gene>
<keyword id="KW-0150">Chloroplast</keyword>
<keyword id="KW-0472">Membrane</keyword>
<keyword id="KW-0934">Plastid</keyword>
<keyword id="KW-0793">Thylakoid</keyword>
<keyword id="KW-0812">Transmembrane</keyword>
<keyword id="KW-1133">Transmembrane helix</keyword>
<protein>
    <recommendedName>
        <fullName evidence="1">Protein PsbN</fullName>
    </recommendedName>
</protein>
<comment type="function">
    <text evidence="1">May play a role in photosystem I and II biogenesis.</text>
</comment>
<comment type="subcellular location">
    <subcellularLocation>
        <location evidence="1">Plastid</location>
        <location evidence="1">Chloroplast thylakoid membrane</location>
        <topology evidence="1">Single-pass membrane protein</topology>
    </subcellularLocation>
</comment>
<comment type="similarity">
    <text evidence="1">Belongs to the PsbN family.</text>
</comment>
<comment type="caution">
    <text evidence="1">Originally thought to be a component of PSII; based on experiments in Synechocystis, N.tabacum and barley, and its absence from PSII in T.elongatus and T.vulcanus, this is probably not true.</text>
</comment>
<proteinExistence type="inferred from homology"/>
<organism>
    <name type="scientific">Sphagnum cuspidatum</name>
    <name type="common">Bog moss</name>
    <dbReference type="NCBI Taxonomy" id="41840"/>
    <lineage>
        <taxon>Eukaryota</taxon>
        <taxon>Viridiplantae</taxon>
        <taxon>Streptophyta</taxon>
        <taxon>Embryophyta</taxon>
        <taxon>Bryophyta</taxon>
        <taxon>Sphagnophytina</taxon>
        <taxon>Sphagnopsida</taxon>
        <taxon>Sphagnales</taxon>
        <taxon>Sphagnaceae</taxon>
        <taxon>Sphagnum</taxon>
    </lineage>
</organism>
<sequence length="43" mass="4819">METATLVAIPISCLLVSFTGYALYTAFGQPSRELRDPFEEHED</sequence>
<name>PSBN_SPHCU</name>
<dbReference type="EMBL" id="AY309629">
    <property type="protein sequence ID" value="AAP70617.1"/>
    <property type="molecule type" value="Genomic_DNA"/>
</dbReference>
<dbReference type="GO" id="GO:0009535">
    <property type="term" value="C:chloroplast thylakoid membrane"/>
    <property type="evidence" value="ECO:0007669"/>
    <property type="project" value="UniProtKB-SubCell"/>
</dbReference>
<dbReference type="GO" id="GO:0015979">
    <property type="term" value="P:photosynthesis"/>
    <property type="evidence" value="ECO:0007669"/>
    <property type="project" value="InterPro"/>
</dbReference>
<dbReference type="HAMAP" id="MF_00293">
    <property type="entry name" value="PSII_PsbN"/>
    <property type="match status" value="1"/>
</dbReference>
<dbReference type="InterPro" id="IPR003398">
    <property type="entry name" value="PSII_PsbN"/>
</dbReference>
<dbReference type="PANTHER" id="PTHR35326">
    <property type="entry name" value="PROTEIN PSBN"/>
    <property type="match status" value="1"/>
</dbReference>
<dbReference type="PANTHER" id="PTHR35326:SF3">
    <property type="entry name" value="PROTEIN PSBN"/>
    <property type="match status" value="1"/>
</dbReference>
<dbReference type="Pfam" id="PF02468">
    <property type="entry name" value="PsbN"/>
    <property type="match status" value="1"/>
</dbReference>
<accession>Q6W630</accession>